<evidence type="ECO:0000269" key="1">
    <source>
    </source>
</evidence>
<evidence type="ECO:0000305" key="2"/>
<geneLocation type="plasmid">
    <name>pNRC200</name>
</geneLocation>
<reference key="1">
    <citation type="journal article" date="1996" name="J. Bacteriol.">
        <title>Fermentative arginine degradation in Halobacterium salinarium (formerly Halobacterium halobium): genes, gene products, and transcripts of the arcRACB gene cluster.</title>
        <authorList>
            <person name="Ruepp A."/>
            <person name="Soppa J."/>
        </authorList>
    </citation>
    <scope>NUCLEOTIDE SEQUENCE [GENOMIC DNA]</scope>
    <scope>FUNCTION</scope>
    <scope>CATALYTIC ACTIVITY</scope>
    <scope>INDUCTION</scope>
    <source>
        <strain>R1 / S9 / L33</strain>
    </source>
</reference>
<reference key="2">
    <citation type="journal article" date="2000" name="Proc. Natl. Acad. Sci. U.S.A.">
        <title>Genome sequence of Halobacterium species NRC-1.</title>
        <authorList>
            <person name="Ng W.V."/>
            <person name="Kennedy S.P."/>
            <person name="Mahairas G.G."/>
            <person name="Berquist B."/>
            <person name="Pan M."/>
            <person name="Shukla H.D."/>
            <person name="Lasky S.R."/>
            <person name="Baliga N.S."/>
            <person name="Thorsson V."/>
            <person name="Sbrogna J."/>
            <person name="Swartzell S."/>
            <person name="Weir D."/>
            <person name="Hall J."/>
            <person name="Dahl T.A."/>
            <person name="Welti R."/>
            <person name="Goo Y.A."/>
            <person name="Leithauser B."/>
            <person name="Keller K."/>
            <person name="Cruz R."/>
            <person name="Danson M.J."/>
            <person name="Hough D.W."/>
            <person name="Maddocks D.G."/>
            <person name="Jablonski P.E."/>
            <person name="Krebs M.P."/>
            <person name="Angevine C.M."/>
            <person name="Dale H."/>
            <person name="Isenbarger T.A."/>
            <person name="Peck R.F."/>
            <person name="Pohlschroder M."/>
            <person name="Spudich J.L."/>
            <person name="Jung K.-H."/>
            <person name="Alam M."/>
            <person name="Freitas T."/>
            <person name="Hou S."/>
            <person name="Daniels C.J."/>
            <person name="Dennis P.P."/>
            <person name="Omer A.D."/>
            <person name="Ebhardt H."/>
            <person name="Lowe T.M."/>
            <person name="Liang P."/>
            <person name="Riley M."/>
            <person name="Hood L."/>
            <person name="DasSarma S."/>
        </authorList>
    </citation>
    <scope>NUCLEOTIDE SEQUENCE [LARGE SCALE GENOMIC DNA]</scope>
    <source>
        <strain>ATCC 700922 / JCM 11081 / NRC-1</strain>
        <plasmid>pNRC200</plasmid>
    </source>
</reference>
<dbReference type="EC" id="2.7.2.2"/>
<dbReference type="EMBL" id="X80931">
    <property type="protein sequence ID" value="CAA56905.1"/>
    <property type="molecule type" value="Genomic_DNA"/>
</dbReference>
<dbReference type="EMBL" id="AE004438">
    <property type="protein sequence ID" value="AAG20947.1"/>
    <property type="molecule type" value="Genomic_DNA"/>
</dbReference>
<dbReference type="PIR" id="T44864">
    <property type="entry name" value="T44864"/>
</dbReference>
<dbReference type="RefSeq" id="WP_010904160.1">
    <property type="nucleotide sequence ID" value="NZ_BK010831.1"/>
</dbReference>
<dbReference type="SMR" id="Q48295"/>
<dbReference type="GeneID" id="68695251"/>
<dbReference type="KEGG" id="hal:VNG_6316G"/>
<dbReference type="PATRIC" id="fig|64091.14.peg.2293"/>
<dbReference type="HOGENOM" id="CLU_076278_0_0_2"/>
<dbReference type="InParanoid" id="Q48295"/>
<dbReference type="OrthoDB" id="31128at2157"/>
<dbReference type="PhylomeDB" id="Q48295"/>
<dbReference type="BioCyc" id="MetaCyc:MONOMER-663"/>
<dbReference type="UniPathway" id="UPA00996">
    <property type="reaction ID" value="UER00366"/>
</dbReference>
<dbReference type="Proteomes" id="UP000000554">
    <property type="component" value="Plasmid pNRC200"/>
</dbReference>
<dbReference type="GO" id="GO:0005829">
    <property type="term" value="C:cytosol"/>
    <property type="evidence" value="ECO:0000318"/>
    <property type="project" value="GO_Central"/>
</dbReference>
<dbReference type="GO" id="GO:0005524">
    <property type="term" value="F:ATP binding"/>
    <property type="evidence" value="ECO:0007669"/>
    <property type="project" value="UniProtKB-KW"/>
</dbReference>
<dbReference type="GO" id="GO:0008804">
    <property type="term" value="F:carbamate kinase activity"/>
    <property type="evidence" value="ECO:0000318"/>
    <property type="project" value="GO_Central"/>
</dbReference>
<dbReference type="GO" id="GO:0019546">
    <property type="term" value="P:arginine deiminase pathway"/>
    <property type="evidence" value="ECO:0000318"/>
    <property type="project" value="GO_Central"/>
</dbReference>
<dbReference type="CDD" id="cd04235">
    <property type="entry name" value="AAK_CK"/>
    <property type="match status" value="1"/>
</dbReference>
<dbReference type="FunFam" id="3.40.1160.10:FF:000007">
    <property type="entry name" value="Carbamate kinase"/>
    <property type="match status" value="1"/>
</dbReference>
<dbReference type="Gene3D" id="3.40.1160.10">
    <property type="entry name" value="Acetylglutamate kinase-like"/>
    <property type="match status" value="1"/>
</dbReference>
<dbReference type="InterPro" id="IPR036393">
    <property type="entry name" value="AceGlu_kinase-like_sf"/>
</dbReference>
<dbReference type="InterPro" id="IPR001048">
    <property type="entry name" value="Asp/Glu/Uridylate_kinase"/>
</dbReference>
<dbReference type="InterPro" id="IPR003964">
    <property type="entry name" value="Carb_kinase"/>
</dbReference>
<dbReference type="NCBIfam" id="TIGR00746">
    <property type="entry name" value="arcC"/>
    <property type="match status" value="1"/>
</dbReference>
<dbReference type="NCBIfam" id="NF009007">
    <property type="entry name" value="PRK12352.1"/>
    <property type="match status" value="1"/>
</dbReference>
<dbReference type="PANTHER" id="PTHR30409">
    <property type="entry name" value="CARBAMATE KINASE"/>
    <property type="match status" value="1"/>
</dbReference>
<dbReference type="PANTHER" id="PTHR30409:SF1">
    <property type="entry name" value="CARBAMATE KINASE-RELATED"/>
    <property type="match status" value="1"/>
</dbReference>
<dbReference type="Pfam" id="PF00696">
    <property type="entry name" value="AA_kinase"/>
    <property type="match status" value="1"/>
</dbReference>
<dbReference type="PIRSF" id="PIRSF000723">
    <property type="entry name" value="Carbamate_kin"/>
    <property type="match status" value="1"/>
</dbReference>
<dbReference type="PRINTS" id="PR01469">
    <property type="entry name" value="CARBMTKINASE"/>
</dbReference>
<dbReference type="SUPFAM" id="SSF53633">
    <property type="entry name" value="Carbamate kinase-like"/>
    <property type="match status" value="1"/>
</dbReference>
<accession>Q48295</accession>
<accession>Q9HHM9</accession>
<proteinExistence type="evidence at protein level"/>
<name>ARCC_HALSA</name>
<feature type="chain" id="PRO_0000185142" description="Carbamate kinase">
    <location>
        <begin position="1"/>
        <end position="307"/>
    </location>
</feature>
<gene>
    <name type="primary">arcC</name>
    <name type="ordered locus">VNG_6316G</name>
</gene>
<comment type="function">
    <text evidence="1">Carbamate kinase involved in the arginine deiminase pathway of fermentative arginine utilization.</text>
</comment>
<comment type="catalytic activity">
    <reaction evidence="1">
        <text>hydrogencarbonate + NH4(+) + ATP = carbamoyl phosphate + ADP + H2O + H(+)</text>
        <dbReference type="Rhea" id="RHEA:10152"/>
        <dbReference type="ChEBI" id="CHEBI:15377"/>
        <dbReference type="ChEBI" id="CHEBI:15378"/>
        <dbReference type="ChEBI" id="CHEBI:17544"/>
        <dbReference type="ChEBI" id="CHEBI:28938"/>
        <dbReference type="ChEBI" id="CHEBI:30616"/>
        <dbReference type="ChEBI" id="CHEBI:58228"/>
        <dbReference type="ChEBI" id="CHEBI:456216"/>
        <dbReference type="EC" id="2.7.2.2"/>
    </reaction>
</comment>
<comment type="pathway">
    <text>Metabolic intermediate metabolism; carbamoyl phosphate degradation; CO(2) and NH(3) from carbamoyl phosphate: step 1/1.</text>
</comment>
<comment type="subcellular location">
    <subcellularLocation>
        <location evidence="2">Cytoplasm</location>
    </subcellularLocation>
</comment>
<comment type="induction">
    <text evidence="1">20-fold induction in fermentatively grown cells.</text>
</comment>
<comment type="similarity">
    <text evidence="2">Belongs to the carbamate kinase family.</text>
</comment>
<sequence length="307" mass="32535">MSYTVVALGGNALLRGGEGSIQDQRDTIEQTVPHFVDLYERGHELVFTHGNGPQVGQLLLQNEEAESAAEKPLDVLGAESQAQIGYLLQQQLREELGETPATVITQTIVDEDDPAFDDPTKRIGPFYDEDEASEKDFPVKEGTDGDGNVGYRRVVPSPKPVDIVEAEHIKTLVETGKPVISSGGGGVPVVEDGDSLTGVAAVIDKDRAAQSLATDIGADEFLVLTDVDAVYRNFGTEDEEELSELTTEEAADMLAAGEFGEGSMAPKVEACIEFVESGGDRAIITKPETATEALDGAAGTTVVPADE</sequence>
<organism>
    <name type="scientific">Halobacterium salinarum (strain ATCC 700922 / JCM 11081 / NRC-1)</name>
    <name type="common">Halobacterium halobium</name>
    <dbReference type="NCBI Taxonomy" id="64091"/>
    <lineage>
        <taxon>Archaea</taxon>
        <taxon>Methanobacteriati</taxon>
        <taxon>Methanobacteriota</taxon>
        <taxon>Stenosarchaea group</taxon>
        <taxon>Halobacteria</taxon>
        <taxon>Halobacteriales</taxon>
        <taxon>Halobacteriaceae</taxon>
        <taxon>Halobacterium</taxon>
        <taxon>Halobacterium salinarum NRC-34001</taxon>
    </lineage>
</organism>
<keyword id="KW-0056">Arginine metabolism</keyword>
<keyword id="KW-0067">ATP-binding</keyword>
<keyword id="KW-0963">Cytoplasm</keyword>
<keyword id="KW-0418">Kinase</keyword>
<keyword id="KW-0547">Nucleotide-binding</keyword>
<keyword id="KW-0614">Plasmid</keyword>
<keyword id="KW-1185">Reference proteome</keyword>
<keyword id="KW-0808">Transferase</keyword>
<protein>
    <recommendedName>
        <fullName>Carbamate kinase</fullName>
        <shortName>CK</shortName>
        <ecNumber>2.7.2.2</ecNumber>
    </recommendedName>
</protein>